<protein>
    <recommendedName>
        <fullName>Short neurotoxin 1</fullName>
    </recommendedName>
    <alternativeName>
        <fullName>Toxin A</fullName>
    </alternativeName>
</protein>
<feature type="chain" id="PRO_0000093568" description="Short neurotoxin 1" evidence="3">
    <location>
        <begin position="1"/>
        <end position="60"/>
    </location>
</feature>
<feature type="disulfide bond" evidence="1">
    <location>
        <begin position="3"/>
        <end position="22"/>
    </location>
</feature>
<feature type="disulfide bond" evidence="1">
    <location>
        <begin position="17"/>
        <end position="39"/>
    </location>
</feature>
<feature type="disulfide bond" evidence="1">
    <location>
        <begin position="41"/>
        <end position="52"/>
    </location>
</feature>
<feature type="disulfide bond" evidence="1">
    <location>
        <begin position="53"/>
        <end position="58"/>
    </location>
</feature>
<dbReference type="PIR" id="A01706">
    <property type="entry name" value="N1AT1"/>
</dbReference>
<dbReference type="SMR" id="P68412"/>
<dbReference type="GO" id="GO:0005576">
    <property type="term" value="C:extracellular region"/>
    <property type="evidence" value="ECO:0007669"/>
    <property type="project" value="UniProtKB-SubCell"/>
</dbReference>
<dbReference type="GO" id="GO:0030550">
    <property type="term" value="F:acetylcholine receptor inhibitor activity"/>
    <property type="evidence" value="ECO:0007669"/>
    <property type="project" value="UniProtKB-KW"/>
</dbReference>
<dbReference type="GO" id="GO:0099106">
    <property type="term" value="F:ion channel regulator activity"/>
    <property type="evidence" value="ECO:0007669"/>
    <property type="project" value="UniProtKB-KW"/>
</dbReference>
<dbReference type="GO" id="GO:0090729">
    <property type="term" value="F:toxin activity"/>
    <property type="evidence" value="ECO:0007669"/>
    <property type="project" value="UniProtKB-KW"/>
</dbReference>
<dbReference type="CDD" id="cd00206">
    <property type="entry name" value="TFP_snake_toxin"/>
    <property type="match status" value="1"/>
</dbReference>
<dbReference type="Gene3D" id="2.10.60.10">
    <property type="entry name" value="CD59"/>
    <property type="match status" value="1"/>
</dbReference>
<dbReference type="InterPro" id="IPR003571">
    <property type="entry name" value="Snake_3FTx"/>
</dbReference>
<dbReference type="InterPro" id="IPR045860">
    <property type="entry name" value="Snake_toxin-like_sf"/>
</dbReference>
<dbReference type="InterPro" id="IPR018354">
    <property type="entry name" value="Snake_toxin_con_site"/>
</dbReference>
<dbReference type="InterPro" id="IPR054131">
    <property type="entry name" value="Toxin_cobra-type"/>
</dbReference>
<dbReference type="Pfam" id="PF21947">
    <property type="entry name" value="Toxin_cobra-type"/>
    <property type="match status" value="1"/>
</dbReference>
<dbReference type="SUPFAM" id="SSF57302">
    <property type="entry name" value="Snake toxin-like"/>
    <property type="match status" value="1"/>
</dbReference>
<dbReference type="PROSITE" id="PS00272">
    <property type="entry name" value="SNAKE_TOXIN"/>
    <property type="match status" value="1"/>
</dbReference>
<sequence length="60" mass="6599">MTCCNQQSSQPKTTTNCAGNSCYKKTWSDHRGTIIERGCGCPQVKSGIKLECCHTNECNN</sequence>
<organism>
    <name type="scientific">Hydrophis stokesii</name>
    <name type="common">Stokes's sea snake</name>
    <name type="synonym">Astrotia stokesii</name>
    <dbReference type="NCBI Taxonomy" id="355677"/>
    <lineage>
        <taxon>Eukaryota</taxon>
        <taxon>Metazoa</taxon>
        <taxon>Chordata</taxon>
        <taxon>Craniata</taxon>
        <taxon>Vertebrata</taxon>
        <taxon>Euteleostomi</taxon>
        <taxon>Lepidosauria</taxon>
        <taxon>Squamata</taxon>
        <taxon>Bifurcata</taxon>
        <taxon>Unidentata</taxon>
        <taxon>Episquamata</taxon>
        <taxon>Toxicofera</taxon>
        <taxon>Serpentes</taxon>
        <taxon>Colubroidea</taxon>
        <taxon>Elapidae</taxon>
        <taxon>Hydrophiinae</taxon>
        <taxon>Hydrophis</taxon>
    </lineage>
</organism>
<name>3S11_HYDST</name>
<reference key="1">
    <citation type="journal article" date="1978" name="Biochem. J.">
        <title>Three neurotoxins from the venom of a sea snake Astrotia stokesii, including two long-chain neurotoxic proteins with amidated C-termini.</title>
        <authorList>
            <person name="Maeda N."/>
            <person name="Tamiya N."/>
        </authorList>
    </citation>
    <scope>PROTEIN SEQUENCE</scope>
    <scope>TOXIC DOSE</scope>
    <scope>SUBCELLULAR LOCATION</scope>
    <source>
        <tissue>Venom</tissue>
    </source>
</reference>
<accession>P68412</accession>
<accession>P01438</accession>
<accession>P10461</accession>
<accession>P19005</accession>
<proteinExistence type="evidence at protein level"/>
<comment type="function">
    <text evidence="2">Binds to muscle nicotinic acetylcholine receptor (nAChR) and inhibit acetylcholine from binding to the receptor, thereby impairing neuromuscular transmission.</text>
</comment>
<comment type="subcellular location">
    <subcellularLocation>
        <location evidence="3">Secreted</location>
    </subcellularLocation>
</comment>
<comment type="tissue specificity">
    <text evidence="4">Expressed by the venom gland.</text>
</comment>
<comment type="toxic dose">
    <text evidence="3">LD(50) is 0.13 mg/kg by intramuscular injection into mice.</text>
</comment>
<comment type="similarity">
    <text evidence="4">Belongs to the three-finger toxin family. Short-chain subfamily. Type I alpha-neurotoxin sub-subfamily.</text>
</comment>
<keyword id="KW-0008">Acetylcholine receptor inhibiting toxin</keyword>
<keyword id="KW-0903">Direct protein sequencing</keyword>
<keyword id="KW-1015">Disulfide bond</keyword>
<keyword id="KW-0872">Ion channel impairing toxin</keyword>
<keyword id="KW-0528">Neurotoxin</keyword>
<keyword id="KW-0629">Postsynaptic neurotoxin</keyword>
<keyword id="KW-0964">Secreted</keyword>
<keyword id="KW-0800">Toxin</keyword>
<evidence type="ECO:0000250" key="1">
    <source>
        <dbReference type="UniProtKB" id="P0C1Z0"/>
    </source>
</evidence>
<evidence type="ECO:0000250" key="2">
    <source>
        <dbReference type="UniProtKB" id="P60775"/>
    </source>
</evidence>
<evidence type="ECO:0000269" key="3">
    <source>
    </source>
</evidence>
<evidence type="ECO:0000305" key="4"/>